<evidence type="ECO:0000255" key="1">
    <source>
        <dbReference type="HAMAP-Rule" id="MF_00627"/>
    </source>
</evidence>
<evidence type="ECO:0000305" key="2"/>
<comment type="function">
    <text evidence="1">Catalyzes the NAD(+)-dependent oxidation of L-threonine to 2-amino-3-ketobutyrate.</text>
</comment>
<comment type="catalytic activity">
    <reaction evidence="1">
        <text>L-threonine + NAD(+) = (2S)-2-amino-3-oxobutanoate + NADH + H(+)</text>
        <dbReference type="Rhea" id="RHEA:13161"/>
        <dbReference type="ChEBI" id="CHEBI:15378"/>
        <dbReference type="ChEBI" id="CHEBI:57540"/>
        <dbReference type="ChEBI" id="CHEBI:57926"/>
        <dbReference type="ChEBI" id="CHEBI:57945"/>
        <dbReference type="ChEBI" id="CHEBI:78948"/>
        <dbReference type="EC" id="1.1.1.103"/>
    </reaction>
</comment>
<comment type="cofactor">
    <cofactor evidence="1">
        <name>Zn(2+)</name>
        <dbReference type="ChEBI" id="CHEBI:29105"/>
    </cofactor>
    <text evidence="1">Binds 2 Zn(2+) ions per subunit.</text>
</comment>
<comment type="pathway">
    <text evidence="1">Amino-acid degradation; L-threonine degradation via oxydo-reductase pathway; glycine from L-threonine: step 1/2.</text>
</comment>
<comment type="subunit">
    <text evidence="1">Homotetramer.</text>
</comment>
<comment type="subcellular location">
    <subcellularLocation>
        <location evidence="1">Cytoplasm</location>
    </subcellularLocation>
</comment>
<comment type="similarity">
    <text evidence="1">Belongs to the zinc-containing alcohol dehydrogenase family.</text>
</comment>
<comment type="sequence caution" evidence="2">
    <conflict type="erroneous initiation">
        <sequence resource="EMBL-CDS" id="AAU26791"/>
    </conflict>
</comment>
<dbReference type="EC" id="1.1.1.103" evidence="1"/>
<dbReference type="EMBL" id="AE017354">
    <property type="protein sequence ID" value="AAU26791.1"/>
    <property type="status" value="ALT_INIT"/>
    <property type="molecule type" value="Genomic_DNA"/>
</dbReference>
<dbReference type="RefSeq" id="WP_014843524.1">
    <property type="nucleotide sequence ID" value="NC_002942.5"/>
</dbReference>
<dbReference type="RefSeq" id="YP_094738.1">
    <property type="nucleotide sequence ID" value="NC_002942.5"/>
</dbReference>
<dbReference type="SMR" id="Q5ZXM9"/>
<dbReference type="STRING" id="272624.lpg0702"/>
<dbReference type="PaxDb" id="272624-lpg0702"/>
<dbReference type="GeneID" id="57034695"/>
<dbReference type="KEGG" id="lpn:lpg0702"/>
<dbReference type="PATRIC" id="fig|272624.6.peg.724"/>
<dbReference type="eggNOG" id="COG1063">
    <property type="taxonomic scope" value="Bacteria"/>
</dbReference>
<dbReference type="HOGENOM" id="CLU_026673_11_0_6"/>
<dbReference type="OrthoDB" id="9773078at2"/>
<dbReference type="UniPathway" id="UPA00046">
    <property type="reaction ID" value="UER00505"/>
</dbReference>
<dbReference type="Proteomes" id="UP000000609">
    <property type="component" value="Chromosome"/>
</dbReference>
<dbReference type="GO" id="GO:0005737">
    <property type="term" value="C:cytoplasm"/>
    <property type="evidence" value="ECO:0007669"/>
    <property type="project" value="UniProtKB-SubCell"/>
</dbReference>
<dbReference type="GO" id="GO:0008743">
    <property type="term" value="F:L-threonine 3-dehydrogenase activity"/>
    <property type="evidence" value="ECO:0007669"/>
    <property type="project" value="UniProtKB-UniRule"/>
</dbReference>
<dbReference type="GO" id="GO:0008270">
    <property type="term" value="F:zinc ion binding"/>
    <property type="evidence" value="ECO:0007669"/>
    <property type="project" value="UniProtKB-UniRule"/>
</dbReference>
<dbReference type="GO" id="GO:0019518">
    <property type="term" value="P:L-threonine catabolic process to glycine"/>
    <property type="evidence" value="ECO:0007669"/>
    <property type="project" value="UniProtKB-UniPathway"/>
</dbReference>
<dbReference type="Gene3D" id="3.90.180.10">
    <property type="entry name" value="Medium-chain alcohol dehydrogenases, catalytic domain"/>
    <property type="match status" value="1"/>
</dbReference>
<dbReference type="Gene3D" id="3.40.50.720">
    <property type="entry name" value="NAD(P)-binding Rossmann-like Domain"/>
    <property type="match status" value="1"/>
</dbReference>
<dbReference type="HAMAP" id="MF_00627">
    <property type="entry name" value="Thr_dehydrog"/>
    <property type="match status" value="1"/>
</dbReference>
<dbReference type="InterPro" id="IPR013149">
    <property type="entry name" value="ADH-like_C"/>
</dbReference>
<dbReference type="InterPro" id="IPR013154">
    <property type="entry name" value="ADH-like_N"/>
</dbReference>
<dbReference type="InterPro" id="IPR002328">
    <property type="entry name" value="ADH_Zn_CS"/>
</dbReference>
<dbReference type="InterPro" id="IPR011032">
    <property type="entry name" value="GroES-like_sf"/>
</dbReference>
<dbReference type="InterPro" id="IPR004627">
    <property type="entry name" value="L-Threonine_3-DHase"/>
</dbReference>
<dbReference type="InterPro" id="IPR036291">
    <property type="entry name" value="NAD(P)-bd_dom_sf"/>
</dbReference>
<dbReference type="InterPro" id="IPR020843">
    <property type="entry name" value="PKS_ER"/>
</dbReference>
<dbReference type="InterPro" id="IPR050129">
    <property type="entry name" value="Zn_alcohol_dh"/>
</dbReference>
<dbReference type="NCBIfam" id="NF003808">
    <property type="entry name" value="PRK05396.1"/>
    <property type="match status" value="1"/>
</dbReference>
<dbReference type="NCBIfam" id="TIGR00692">
    <property type="entry name" value="tdh"/>
    <property type="match status" value="1"/>
</dbReference>
<dbReference type="PANTHER" id="PTHR43401">
    <property type="entry name" value="L-THREONINE 3-DEHYDROGENASE"/>
    <property type="match status" value="1"/>
</dbReference>
<dbReference type="PANTHER" id="PTHR43401:SF2">
    <property type="entry name" value="L-THREONINE 3-DEHYDROGENASE"/>
    <property type="match status" value="1"/>
</dbReference>
<dbReference type="Pfam" id="PF08240">
    <property type="entry name" value="ADH_N"/>
    <property type="match status" value="1"/>
</dbReference>
<dbReference type="Pfam" id="PF00107">
    <property type="entry name" value="ADH_zinc_N"/>
    <property type="match status" value="1"/>
</dbReference>
<dbReference type="SMART" id="SM00829">
    <property type="entry name" value="PKS_ER"/>
    <property type="match status" value="1"/>
</dbReference>
<dbReference type="SUPFAM" id="SSF50129">
    <property type="entry name" value="GroES-like"/>
    <property type="match status" value="1"/>
</dbReference>
<dbReference type="SUPFAM" id="SSF51735">
    <property type="entry name" value="NAD(P)-binding Rossmann-fold domains"/>
    <property type="match status" value="1"/>
</dbReference>
<dbReference type="PROSITE" id="PS00059">
    <property type="entry name" value="ADH_ZINC"/>
    <property type="match status" value="1"/>
</dbReference>
<feature type="chain" id="PRO_0000160844" description="L-threonine 3-dehydrogenase">
    <location>
        <begin position="1"/>
        <end position="340"/>
    </location>
</feature>
<feature type="active site" description="Charge relay system" evidence="1">
    <location>
        <position position="40"/>
    </location>
</feature>
<feature type="active site" description="Charge relay system" evidence="1">
    <location>
        <position position="43"/>
    </location>
</feature>
<feature type="binding site" evidence="1">
    <location>
        <position position="38"/>
    </location>
    <ligand>
        <name>Zn(2+)</name>
        <dbReference type="ChEBI" id="CHEBI:29105"/>
        <label>1</label>
        <note>catalytic</note>
    </ligand>
</feature>
<feature type="binding site" evidence="1">
    <location>
        <position position="63"/>
    </location>
    <ligand>
        <name>Zn(2+)</name>
        <dbReference type="ChEBI" id="CHEBI:29105"/>
        <label>1</label>
        <note>catalytic</note>
    </ligand>
</feature>
<feature type="binding site" evidence="1">
    <location>
        <position position="64"/>
    </location>
    <ligand>
        <name>Zn(2+)</name>
        <dbReference type="ChEBI" id="CHEBI:29105"/>
        <label>1</label>
        <note>catalytic</note>
    </ligand>
</feature>
<feature type="binding site" evidence="1">
    <location>
        <position position="93"/>
    </location>
    <ligand>
        <name>Zn(2+)</name>
        <dbReference type="ChEBI" id="CHEBI:29105"/>
        <label>2</label>
    </ligand>
</feature>
<feature type="binding site" evidence="1">
    <location>
        <position position="96"/>
    </location>
    <ligand>
        <name>Zn(2+)</name>
        <dbReference type="ChEBI" id="CHEBI:29105"/>
        <label>2</label>
    </ligand>
</feature>
<feature type="binding site" evidence="1">
    <location>
        <position position="99"/>
    </location>
    <ligand>
        <name>Zn(2+)</name>
        <dbReference type="ChEBI" id="CHEBI:29105"/>
        <label>2</label>
    </ligand>
</feature>
<feature type="binding site" evidence="1">
    <location>
        <position position="107"/>
    </location>
    <ligand>
        <name>Zn(2+)</name>
        <dbReference type="ChEBI" id="CHEBI:29105"/>
        <label>2</label>
    </ligand>
</feature>
<feature type="binding site" evidence="1">
    <location>
        <position position="175"/>
    </location>
    <ligand>
        <name>NAD(+)</name>
        <dbReference type="ChEBI" id="CHEBI:57540"/>
    </ligand>
</feature>
<feature type="binding site" evidence="1">
    <location>
        <position position="195"/>
    </location>
    <ligand>
        <name>NAD(+)</name>
        <dbReference type="ChEBI" id="CHEBI:57540"/>
    </ligand>
</feature>
<feature type="binding site" evidence="1">
    <location>
        <position position="200"/>
    </location>
    <ligand>
        <name>NAD(+)</name>
        <dbReference type="ChEBI" id="CHEBI:57540"/>
    </ligand>
</feature>
<feature type="binding site" evidence="1">
    <location>
        <begin position="262"/>
        <end position="264"/>
    </location>
    <ligand>
        <name>NAD(+)</name>
        <dbReference type="ChEBI" id="CHEBI:57540"/>
    </ligand>
</feature>
<feature type="binding site" evidence="1">
    <location>
        <begin position="286"/>
        <end position="287"/>
    </location>
    <ligand>
        <name>NAD(+)</name>
        <dbReference type="ChEBI" id="CHEBI:57540"/>
    </ligand>
</feature>
<feature type="site" description="Important for catalytic activity for the proton relay mechanism but does not participate directly in the coordination of zinc atom" evidence="1">
    <location>
        <position position="148"/>
    </location>
</feature>
<proteinExistence type="inferred from homology"/>
<gene>
    <name evidence="1" type="primary">tdh</name>
    <name type="ordered locus">lpg0702</name>
</gene>
<keyword id="KW-0963">Cytoplasm</keyword>
<keyword id="KW-0479">Metal-binding</keyword>
<keyword id="KW-0520">NAD</keyword>
<keyword id="KW-0560">Oxidoreductase</keyword>
<keyword id="KW-1185">Reference proteome</keyword>
<keyword id="KW-0862">Zinc</keyword>
<name>TDH_LEGPH</name>
<organism>
    <name type="scientific">Legionella pneumophila subsp. pneumophila (strain Philadelphia 1 / ATCC 33152 / DSM 7513)</name>
    <dbReference type="NCBI Taxonomy" id="272624"/>
    <lineage>
        <taxon>Bacteria</taxon>
        <taxon>Pseudomonadati</taxon>
        <taxon>Pseudomonadota</taxon>
        <taxon>Gammaproteobacteria</taxon>
        <taxon>Legionellales</taxon>
        <taxon>Legionellaceae</taxon>
        <taxon>Legionella</taxon>
    </lineage>
</organism>
<reference key="1">
    <citation type="journal article" date="2004" name="Science">
        <title>The genomic sequence of the accidental pathogen Legionella pneumophila.</title>
        <authorList>
            <person name="Chien M."/>
            <person name="Morozova I."/>
            <person name="Shi S."/>
            <person name="Sheng H."/>
            <person name="Chen J."/>
            <person name="Gomez S.M."/>
            <person name="Asamani G."/>
            <person name="Hill K."/>
            <person name="Nuara J."/>
            <person name="Feder M."/>
            <person name="Rineer J."/>
            <person name="Greenberg J.J."/>
            <person name="Steshenko V."/>
            <person name="Park S.H."/>
            <person name="Zhao B."/>
            <person name="Teplitskaya E."/>
            <person name="Edwards J.R."/>
            <person name="Pampou S."/>
            <person name="Georghiou A."/>
            <person name="Chou I.-C."/>
            <person name="Iannuccilli W."/>
            <person name="Ulz M.E."/>
            <person name="Kim D.H."/>
            <person name="Geringer-Sameth A."/>
            <person name="Goldsberry C."/>
            <person name="Morozov P."/>
            <person name="Fischer S.G."/>
            <person name="Segal G."/>
            <person name="Qu X."/>
            <person name="Rzhetsky A."/>
            <person name="Zhang P."/>
            <person name="Cayanis E."/>
            <person name="De Jong P.J."/>
            <person name="Ju J."/>
            <person name="Kalachikov S."/>
            <person name="Shuman H.A."/>
            <person name="Russo J.J."/>
        </authorList>
    </citation>
    <scope>NUCLEOTIDE SEQUENCE [LARGE SCALE GENOMIC DNA]</scope>
    <source>
        <strain>Philadelphia 1 / ATCC 33152 / DSM 7513</strain>
    </source>
</reference>
<protein>
    <recommendedName>
        <fullName evidence="1">L-threonine 3-dehydrogenase</fullName>
        <shortName evidence="1">TDH</shortName>
        <ecNumber evidence="1">1.1.1.103</ecNumber>
    </recommendedName>
</protein>
<sequence length="340" mass="37210">MKSLVKAKKEPGIWMQDIPVPEYGVNDVLIKIKRTAICGTDIHIYSWDEWAQATIPVPMTVGHEFYGEIVEVGKEVQGLKVGQRVSGEGHITCGFCRNCRAGKRHLCRNTLGVGVNRPGCFAEYLALPATNVIALPDNITEEQAAILDPFGNAAHCALAFDVVGEDVLITGAGPIGIMAAAIVRHIGARHVVITDVNDHRLELARQMGVSRAVNVKYQKLSDVANELGMLEGFDVGLEMSGNPMALNDMMKAMNHGGHVALLGIPPQETPIDWNQVIFKGLVIKGIYGREMFETWYKMIAMLQSGLNISPVITHNFPVDEYQHAFQIMASGQSGKVILNW</sequence>
<accession>Q5ZXM9</accession>